<comment type="function">
    <text>HMWC (high-molecular-weight cytochrome c), ORF2, ORF3, ORF4, ORF5 and ORF6 in the HMC operon form a transmembrane protein complex that allows electron flow from the periplasmic hydrogenase to the cytoplasmic enzymes that catalyze reduction of sulfates.</text>
</comment>
<comment type="subcellular location">
    <subcellularLocation>
        <location>Cell membrane</location>
        <topology>Single-pass membrane protein</topology>
    </subcellularLocation>
</comment>
<feature type="chain" id="PRO_0000084004" description="Protein DVU_0533">
    <location>
        <begin position="1"/>
        <end position="47"/>
    </location>
</feature>
<feature type="transmembrane region" description="Helical" evidence="1">
    <location>
        <begin position="18"/>
        <end position="37"/>
    </location>
</feature>
<keyword id="KW-1003">Cell membrane</keyword>
<keyword id="KW-0472">Membrane</keyword>
<keyword id="KW-1185">Reference proteome</keyword>
<keyword id="KW-0812">Transmembrane</keyword>
<keyword id="KW-1133">Transmembrane helix</keyword>
<sequence length="47" mass="5773">MDQAIYTLHEFMLHTKNWTYILMGVTLLVYVGYWLFLTGRDEKIRKY</sequence>
<name>HMC4_NITV2</name>
<reference key="1">
    <citation type="journal article" date="1993" name="J. Bacteriol.">
        <title>The hmc operon of Desulfovibrio vulgaris subsp. vulgaris Hildenborough encodes a potential transmembrane redox protein complex.</title>
        <authorList>
            <person name="Rossi M."/>
            <person name="Pollock W.B.R."/>
            <person name="Reij M.W."/>
            <person name="Keon R.G."/>
            <person name="Fu R."/>
            <person name="Voordouw G."/>
        </authorList>
    </citation>
    <scope>NUCLEOTIDE SEQUENCE [GENOMIC DNA]</scope>
</reference>
<reference key="2">
    <citation type="journal article" date="2004" name="Nat. Biotechnol.">
        <title>The genome sequence of the anaerobic, sulfate-reducing bacterium Desulfovibrio vulgaris Hildenborough.</title>
        <authorList>
            <person name="Heidelberg J.F."/>
            <person name="Seshadri R."/>
            <person name="Haveman S.A."/>
            <person name="Hemme C.L."/>
            <person name="Paulsen I.T."/>
            <person name="Kolonay J.F."/>
            <person name="Eisen J.A."/>
            <person name="Ward N.L."/>
            <person name="Methe B.A."/>
            <person name="Brinkac L.M."/>
            <person name="Daugherty S.C."/>
            <person name="DeBoy R.T."/>
            <person name="Dodson R.J."/>
            <person name="Durkin A.S."/>
            <person name="Madupu R."/>
            <person name="Nelson W.C."/>
            <person name="Sullivan S.A."/>
            <person name="Fouts D.E."/>
            <person name="Haft D.H."/>
            <person name="Selengut J."/>
            <person name="Peterson J.D."/>
            <person name="Davidsen T.M."/>
            <person name="Zafar N."/>
            <person name="Zhou L."/>
            <person name="Radune D."/>
            <person name="Dimitrov G."/>
            <person name="Hance M."/>
            <person name="Tran K."/>
            <person name="Khouri H.M."/>
            <person name="Gill J."/>
            <person name="Utterback T.R."/>
            <person name="Feldblyum T.V."/>
            <person name="Wall J.D."/>
            <person name="Voordouw G."/>
            <person name="Fraser C.M."/>
        </authorList>
    </citation>
    <scope>NUCLEOTIDE SEQUENCE [LARGE SCALE GENOMIC DNA]</scope>
    <source>
        <strain>ATCC 29579 / DSM 644 / CCUG 34227 / NCIMB 8303 / VKM B-1760 / Hildenborough</strain>
    </source>
</reference>
<gene>
    <name type="ordered locus">DVU_0533</name>
</gene>
<accession>P33391</accession>
<organism>
    <name type="scientific">Nitratidesulfovibrio vulgaris (strain ATCC 29579 / DSM 644 / CCUG 34227 / NCIMB 8303 / VKM B-1760 / Hildenborough)</name>
    <name type="common">Desulfovibrio vulgaris</name>
    <dbReference type="NCBI Taxonomy" id="882"/>
    <lineage>
        <taxon>Bacteria</taxon>
        <taxon>Pseudomonadati</taxon>
        <taxon>Thermodesulfobacteriota</taxon>
        <taxon>Desulfovibrionia</taxon>
        <taxon>Desulfovibrionales</taxon>
        <taxon>Desulfovibrionaceae</taxon>
        <taxon>Nitratidesulfovibrio</taxon>
    </lineage>
</organism>
<protein>
    <recommendedName>
        <fullName>Protein DVU_0533</fullName>
    </recommendedName>
    <alternativeName>
        <fullName>HMC operon ORF 4</fullName>
    </alternativeName>
</protein>
<dbReference type="EMBL" id="L16784">
    <property type="protein sequence ID" value="AAA71997.1"/>
    <property type="molecule type" value="Unassigned_DNA"/>
</dbReference>
<dbReference type="EMBL" id="AE017285">
    <property type="protein sequence ID" value="AAS95015.1"/>
    <property type="molecule type" value="Genomic_DNA"/>
</dbReference>
<dbReference type="PIR" id="D40605">
    <property type="entry name" value="D40605"/>
</dbReference>
<dbReference type="RefSeq" id="WP_010937839.1">
    <property type="nucleotide sequence ID" value="NC_002937.3"/>
</dbReference>
<dbReference type="RefSeq" id="YP_009756.1">
    <property type="nucleotide sequence ID" value="NC_002937.3"/>
</dbReference>
<dbReference type="SMR" id="P33391"/>
<dbReference type="STRING" id="882.DVU_0533"/>
<dbReference type="PaxDb" id="882-DVU_0533"/>
<dbReference type="EnsemblBacteria" id="AAS95015">
    <property type="protein sequence ID" value="AAS95015"/>
    <property type="gene ID" value="DVU_0533"/>
</dbReference>
<dbReference type="KEGG" id="dvu:DVU_0533"/>
<dbReference type="PATRIC" id="fig|882.5.peg.509"/>
<dbReference type="eggNOG" id="ENOG503189B">
    <property type="taxonomic scope" value="Bacteria"/>
</dbReference>
<dbReference type="HOGENOM" id="CLU_213739_0_0_7"/>
<dbReference type="OrthoDB" id="5460179at2"/>
<dbReference type="BioCyc" id="MetaCyc:MONOMER-22165"/>
<dbReference type="Proteomes" id="UP000002194">
    <property type="component" value="Chromosome"/>
</dbReference>
<dbReference type="GO" id="GO:0005886">
    <property type="term" value="C:plasma membrane"/>
    <property type="evidence" value="ECO:0007669"/>
    <property type="project" value="UniProtKB-SubCell"/>
</dbReference>
<dbReference type="InterPro" id="IPR054911">
    <property type="entry name" value="sulf_resp_HmcD"/>
</dbReference>
<dbReference type="NCBIfam" id="NF045712">
    <property type="entry name" value="sulf_resp_HmcD"/>
    <property type="match status" value="1"/>
</dbReference>
<evidence type="ECO:0000255" key="1"/>
<proteinExistence type="predicted"/>